<keyword id="KW-0067">ATP-binding</keyword>
<keyword id="KW-0963">Cytoplasm</keyword>
<keyword id="KW-0227">DNA damage</keyword>
<keyword id="KW-0233">DNA recombination</keyword>
<keyword id="KW-0234">DNA repair</keyword>
<keyword id="KW-0238">DNA-binding</keyword>
<keyword id="KW-0547">Nucleotide-binding</keyword>
<keyword id="KW-0742">SOS response</keyword>
<gene>
    <name evidence="1" type="primary">recA</name>
    <name type="ordered locus">PSPPH_3805</name>
</gene>
<protein>
    <recommendedName>
        <fullName evidence="1">Protein RecA</fullName>
    </recommendedName>
    <alternativeName>
        <fullName evidence="1">Recombinase A</fullName>
    </alternativeName>
</protein>
<sequence length="354" mass="37700">MDDNKKKALAAALGQIERQFGKGAVMRMGDHDRQAIPAISTGSLGLDIALGIGGLPKGRIVEIYGPESSGKTTLTLSVIAQAQKMGATCAFVDAEHALDPEYAGKLGVNVDDLLVSQPDTGEQALEITDMLVRSNAIDVIVVDSVAALVPKAEIEGEMGDMHVGLQARLMSQALRKITGNIKNANCLVIFINQIRMKIGVMFGSPETTTGGNALKFYASVRLDIRRTGAVKEGDEVVGSETRVKVVKNKVAPPFRQAEFQILYGKGIYLNGEIVDLAVLHGFVEKSGAWYSYQGSKIGQGKANSAKFLADNPEICKALEKQIRDKLLTPGVDTKAVGSREAAVADDMAEADADI</sequence>
<accession>Q48F94</accession>
<dbReference type="EMBL" id="CP000058">
    <property type="protein sequence ID" value="AAZ36891.1"/>
    <property type="molecule type" value="Genomic_DNA"/>
</dbReference>
<dbReference type="RefSeq" id="WP_004657925.1">
    <property type="nucleotide sequence ID" value="NC_005773.3"/>
</dbReference>
<dbReference type="SMR" id="Q48F94"/>
<dbReference type="GeneID" id="69858438"/>
<dbReference type="KEGG" id="psp:PSPPH_3805"/>
<dbReference type="eggNOG" id="COG0468">
    <property type="taxonomic scope" value="Bacteria"/>
</dbReference>
<dbReference type="HOGENOM" id="CLU_040469_3_2_6"/>
<dbReference type="Proteomes" id="UP000000551">
    <property type="component" value="Chromosome"/>
</dbReference>
<dbReference type="GO" id="GO:0005829">
    <property type="term" value="C:cytosol"/>
    <property type="evidence" value="ECO:0007669"/>
    <property type="project" value="TreeGrafter"/>
</dbReference>
<dbReference type="GO" id="GO:0005524">
    <property type="term" value="F:ATP binding"/>
    <property type="evidence" value="ECO:0007669"/>
    <property type="project" value="UniProtKB-UniRule"/>
</dbReference>
<dbReference type="GO" id="GO:0016887">
    <property type="term" value="F:ATP hydrolysis activity"/>
    <property type="evidence" value="ECO:0007669"/>
    <property type="project" value="InterPro"/>
</dbReference>
<dbReference type="GO" id="GO:0140664">
    <property type="term" value="F:ATP-dependent DNA damage sensor activity"/>
    <property type="evidence" value="ECO:0007669"/>
    <property type="project" value="InterPro"/>
</dbReference>
<dbReference type="GO" id="GO:0003684">
    <property type="term" value="F:damaged DNA binding"/>
    <property type="evidence" value="ECO:0007669"/>
    <property type="project" value="UniProtKB-UniRule"/>
</dbReference>
<dbReference type="GO" id="GO:0003697">
    <property type="term" value="F:single-stranded DNA binding"/>
    <property type="evidence" value="ECO:0007669"/>
    <property type="project" value="UniProtKB-UniRule"/>
</dbReference>
<dbReference type="GO" id="GO:0006310">
    <property type="term" value="P:DNA recombination"/>
    <property type="evidence" value="ECO:0007669"/>
    <property type="project" value="UniProtKB-UniRule"/>
</dbReference>
<dbReference type="GO" id="GO:0006281">
    <property type="term" value="P:DNA repair"/>
    <property type="evidence" value="ECO:0007669"/>
    <property type="project" value="UniProtKB-UniRule"/>
</dbReference>
<dbReference type="GO" id="GO:0009432">
    <property type="term" value="P:SOS response"/>
    <property type="evidence" value="ECO:0007669"/>
    <property type="project" value="UniProtKB-UniRule"/>
</dbReference>
<dbReference type="CDD" id="cd00983">
    <property type="entry name" value="RecA"/>
    <property type="match status" value="1"/>
</dbReference>
<dbReference type="FunFam" id="3.40.50.300:FF:000087">
    <property type="entry name" value="Recombinase RecA"/>
    <property type="match status" value="1"/>
</dbReference>
<dbReference type="Gene3D" id="3.40.50.300">
    <property type="entry name" value="P-loop containing nucleotide triphosphate hydrolases"/>
    <property type="match status" value="1"/>
</dbReference>
<dbReference type="HAMAP" id="MF_00268">
    <property type="entry name" value="RecA"/>
    <property type="match status" value="1"/>
</dbReference>
<dbReference type="InterPro" id="IPR003593">
    <property type="entry name" value="AAA+_ATPase"/>
</dbReference>
<dbReference type="InterPro" id="IPR013765">
    <property type="entry name" value="DNA_recomb/repair_RecA"/>
</dbReference>
<dbReference type="InterPro" id="IPR020584">
    <property type="entry name" value="DNA_recomb/repair_RecA_CS"/>
</dbReference>
<dbReference type="InterPro" id="IPR027417">
    <property type="entry name" value="P-loop_NTPase"/>
</dbReference>
<dbReference type="InterPro" id="IPR049261">
    <property type="entry name" value="RecA-like_C"/>
</dbReference>
<dbReference type="InterPro" id="IPR049428">
    <property type="entry name" value="RecA-like_N"/>
</dbReference>
<dbReference type="InterPro" id="IPR020588">
    <property type="entry name" value="RecA_ATP-bd"/>
</dbReference>
<dbReference type="InterPro" id="IPR023400">
    <property type="entry name" value="RecA_C_sf"/>
</dbReference>
<dbReference type="InterPro" id="IPR020587">
    <property type="entry name" value="RecA_monomer-monomer_interface"/>
</dbReference>
<dbReference type="NCBIfam" id="TIGR02012">
    <property type="entry name" value="tigrfam_recA"/>
    <property type="match status" value="1"/>
</dbReference>
<dbReference type="PANTHER" id="PTHR45900:SF1">
    <property type="entry name" value="MITOCHONDRIAL DNA REPAIR PROTEIN RECA HOMOLOG-RELATED"/>
    <property type="match status" value="1"/>
</dbReference>
<dbReference type="PANTHER" id="PTHR45900">
    <property type="entry name" value="RECA"/>
    <property type="match status" value="1"/>
</dbReference>
<dbReference type="Pfam" id="PF00154">
    <property type="entry name" value="RecA"/>
    <property type="match status" value="1"/>
</dbReference>
<dbReference type="Pfam" id="PF21096">
    <property type="entry name" value="RecA_C"/>
    <property type="match status" value="1"/>
</dbReference>
<dbReference type="PRINTS" id="PR00142">
    <property type="entry name" value="RECA"/>
</dbReference>
<dbReference type="SMART" id="SM00382">
    <property type="entry name" value="AAA"/>
    <property type="match status" value="1"/>
</dbReference>
<dbReference type="SUPFAM" id="SSF52540">
    <property type="entry name" value="P-loop containing nucleoside triphosphate hydrolases"/>
    <property type="match status" value="1"/>
</dbReference>
<dbReference type="SUPFAM" id="SSF54752">
    <property type="entry name" value="RecA protein, C-terminal domain"/>
    <property type="match status" value="1"/>
</dbReference>
<dbReference type="PROSITE" id="PS00321">
    <property type="entry name" value="RECA_1"/>
    <property type="match status" value="1"/>
</dbReference>
<dbReference type="PROSITE" id="PS50162">
    <property type="entry name" value="RECA_2"/>
    <property type="match status" value="1"/>
</dbReference>
<dbReference type="PROSITE" id="PS50163">
    <property type="entry name" value="RECA_3"/>
    <property type="match status" value="1"/>
</dbReference>
<evidence type="ECO:0000255" key="1">
    <source>
        <dbReference type="HAMAP-Rule" id="MF_00268"/>
    </source>
</evidence>
<feature type="chain" id="PRO_1000047966" description="Protein RecA">
    <location>
        <begin position="1"/>
        <end position="354"/>
    </location>
</feature>
<feature type="binding site" evidence="1">
    <location>
        <begin position="65"/>
        <end position="72"/>
    </location>
    <ligand>
        <name>ATP</name>
        <dbReference type="ChEBI" id="CHEBI:30616"/>
    </ligand>
</feature>
<comment type="function">
    <text evidence="1">Can catalyze the hydrolysis of ATP in the presence of single-stranded DNA, the ATP-dependent uptake of single-stranded DNA by duplex DNA, and the ATP-dependent hybridization of homologous single-stranded DNAs. It interacts with LexA causing its activation and leading to its autocatalytic cleavage.</text>
</comment>
<comment type="subcellular location">
    <subcellularLocation>
        <location evidence="1">Cytoplasm</location>
    </subcellularLocation>
</comment>
<comment type="similarity">
    <text evidence="1">Belongs to the RecA family.</text>
</comment>
<proteinExistence type="inferred from homology"/>
<name>RECA_PSE14</name>
<organism>
    <name type="scientific">Pseudomonas savastanoi pv. phaseolicola (strain 1448A / Race 6)</name>
    <name type="common">Pseudomonas syringae pv. phaseolicola (strain 1448A / Race 6)</name>
    <dbReference type="NCBI Taxonomy" id="264730"/>
    <lineage>
        <taxon>Bacteria</taxon>
        <taxon>Pseudomonadati</taxon>
        <taxon>Pseudomonadota</taxon>
        <taxon>Gammaproteobacteria</taxon>
        <taxon>Pseudomonadales</taxon>
        <taxon>Pseudomonadaceae</taxon>
        <taxon>Pseudomonas</taxon>
    </lineage>
</organism>
<reference key="1">
    <citation type="journal article" date="2005" name="J. Bacteriol.">
        <title>Whole-genome sequence analysis of Pseudomonas syringae pv. phaseolicola 1448A reveals divergence among pathovars in genes involved in virulence and transposition.</title>
        <authorList>
            <person name="Joardar V."/>
            <person name="Lindeberg M."/>
            <person name="Jackson R.W."/>
            <person name="Selengut J."/>
            <person name="Dodson R."/>
            <person name="Brinkac L.M."/>
            <person name="Daugherty S.C."/>
            <person name="DeBoy R.T."/>
            <person name="Durkin A.S."/>
            <person name="Gwinn Giglio M."/>
            <person name="Madupu R."/>
            <person name="Nelson W.C."/>
            <person name="Rosovitz M.J."/>
            <person name="Sullivan S.A."/>
            <person name="Crabtree J."/>
            <person name="Creasy T."/>
            <person name="Davidsen T.M."/>
            <person name="Haft D.H."/>
            <person name="Zafar N."/>
            <person name="Zhou L."/>
            <person name="Halpin R."/>
            <person name="Holley T."/>
            <person name="Khouri H.M."/>
            <person name="Feldblyum T.V."/>
            <person name="White O."/>
            <person name="Fraser C.M."/>
            <person name="Chatterjee A.K."/>
            <person name="Cartinhour S."/>
            <person name="Schneider D."/>
            <person name="Mansfield J.W."/>
            <person name="Collmer A."/>
            <person name="Buell R."/>
        </authorList>
    </citation>
    <scope>NUCLEOTIDE SEQUENCE [LARGE SCALE GENOMIC DNA]</scope>
    <source>
        <strain>1448A / Race 6</strain>
    </source>
</reference>